<evidence type="ECO:0000255" key="1">
    <source>
        <dbReference type="HAMAP-Rule" id="MF_00505"/>
    </source>
</evidence>
<dbReference type="EMBL" id="CP000447">
    <property type="protein sequence ID" value="ABI71389.1"/>
    <property type="molecule type" value="Genomic_DNA"/>
</dbReference>
<dbReference type="RefSeq" id="WP_011637009.1">
    <property type="nucleotide sequence ID" value="NC_008345.1"/>
</dbReference>
<dbReference type="SMR" id="Q084C6"/>
<dbReference type="STRING" id="318167.Sfri_1538"/>
<dbReference type="KEGG" id="sfr:Sfri_1538"/>
<dbReference type="eggNOG" id="COG0326">
    <property type="taxonomic scope" value="Bacteria"/>
</dbReference>
<dbReference type="HOGENOM" id="CLU_006684_3_0_6"/>
<dbReference type="OrthoDB" id="9802640at2"/>
<dbReference type="Proteomes" id="UP000000684">
    <property type="component" value="Chromosome"/>
</dbReference>
<dbReference type="GO" id="GO:0005737">
    <property type="term" value="C:cytoplasm"/>
    <property type="evidence" value="ECO:0007669"/>
    <property type="project" value="UniProtKB-SubCell"/>
</dbReference>
<dbReference type="GO" id="GO:0005524">
    <property type="term" value="F:ATP binding"/>
    <property type="evidence" value="ECO:0007669"/>
    <property type="project" value="UniProtKB-UniRule"/>
</dbReference>
<dbReference type="GO" id="GO:0016887">
    <property type="term" value="F:ATP hydrolysis activity"/>
    <property type="evidence" value="ECO:0007669"/>
    <property type="project" value="InterPro"/>
</dbReference>
<dbReference type="GO" id="GO:0140662">
    <property type="term" value="F:ATP-dependent protein folding chaperone"/>
    <property type="evidence" value="ECO:0007669"/>
    <property type="project" value="InterPro"/>
</dbReference>
<dbReference type="GO" id="GO:0051082">
    <property type="term" value="F:unfolded protein binding"/>
    <property type="evidence" value="ECO:0007669"/>
    <property type="project" value="UniProtKB-UniRule"/>
</dbReference>
<dbReference type="CDD" id="cd16927">
    <property type="entry name" value="HATPase_Hsp90-like"/>
    <property type="match status" value="1"/>
</dbReference>
<dbReference type="FunFam" id="3.30.230.80:FF:000002">
    <property type="entry name" value="Molecular chaperone HtpG"/>
    <property type="match status" value="1"/>
</dbReference>
<dbReference type="FunFam" id="3.30.565.10:FF:000009">
    <property type="entry name" value="Molecular chaperone HtpG"/>
    <property type="match status" value="1"/>
</dbReference>
<dbReference type="Gene3D" id="3.30.230.80">
    <property type="match status" value="1"/>
</dbReference>
<dbReference type="Gene3D" id="3.40.50.11260">
    <property type="match status" value="1"/>
</dbReference>
<dbReference type="Gene3D" id="1.20.120.790">
    <property type="entry name" value="Heat shock protein 90, C-terminal domain"/>
    <property type="match status" value="1"/>
</dbReference>
<dbReference type="Gene3D" id="3.30.565.10">
    <property type="entry name" value="Histidine kinase-like ATPase, C-terminal domain"/>
    <property type="match status" value="1"/>
</dbReference>
<dbReference type="HAMAP" id="MF_00505">
    <property type="entry name" value="HSP90"/>
    <property type="match status" value="1"/>
</dbReference>
<dbReference type="InterPro" id="IPR036890">
    <property type="entry name" value="HATPase_C_sf"/>
</dbReference>
<dbReference type="InterPro" id="IPR019805">
    <property type="entry name" value="Heat_shock_protein_90_CS"/>
</dbReference>
<dbReference type="InterPro" id="IPR037196">
    <property type="entry name" value="HSP90_C"/>
</dbReference>
<dbReference type="InterPro" id="IPR001404">
    <property type="entry name" value="Hsp90_fam"/>
</dbReference>
<dbReference type="InterPro" id="IPR020575">
    <property type="entry name" value="Hsp90_N"/>
</dbReference>
<dbReference type="InterPro" id="IPR020568">
    <property type="entry name" value="Ribosomal_Su5_D2-typ_SF"/>
</dbReference>
<dbReference type="NCBIfam" id="NF003555">
    <property type="entry name" value="PRK05218.1"/>
    <property type="match status" value="1"/>
</dbReference>
<dbReference type="PANTHER" id="PTHR11528">
    <property type="entry name" value="HEAT SHOCK PROTEIN 90 FAMILY MEMBER"/>
    <property type="match status" value="1"/>
</dbReference>
<dbReference type="Pfam" id="PF13589">
    <property type="entry name" value="HATPase_c_3"/>
    <property type="match status" value="1"/>
</dbReference>
<dbReference type="Pfam" id="PF00183">
    <property type="entry name" value="HSP90"/>
    <property type="match status" value="1"/>
</dbReference>
<dbReference type="PIRSF" id="PIRSF002583">
    <property type="entry name" value="Hsp90"/>
    <property type="match status" value="1"/>
</dbReference>
<dbReference type="PRINTS" id="PR00775">
    <property type="entry name" value="HEATSHOCK90"/>
</dbReference>
<dbReference type="SMART" id="SM00387">
    <property type="entry name" value="HATPase_c"/>
    <property type="match status" value="1"/>
</dbReference>
<dbReference type="SUPFAM" id="SSF55874">
    <property type="entry name" value="ATPase domain of HSP90 chaperone/DNA topoisomerase II/histidine kinase"/>
    <property type="match status" value="1"/>
</dbReference>
<dbReference type="SUPFAM" id="SSF110942">
    <property type="entry name" value="HSP90 C-terminal domain"/>
    <property type="match status" value="1"/>
</dbReference>
<dbReference type="SUPFAM" id="SSF54211">
    <property type="entry name" value="Ribosomal protein S5 domain 2-like"/>
    <property type="match status" value="1"/>
</dbReference>
<dbReference type="PROSITE" id="PS00298">
    <property type="entry name" value="HSP90"/>
    <property type="match status" value="1"/>
</dbReference>
<protein>
    <recommendedName>
        <fullName evidence="1">Chaperone protein HtpG</fullName>
    </recommendedName>
    <alternativeName>
        <fullName evidence="1">Heat shock protein HtpG</fullName>
    </alternativeName>
    <alternativeName>
        <fullName evidence="1">High temperature protein G</fullName>
    </alternativeName>
</protein>
<gene>
    <name evidence="1" type="primary">htpG</name>
    <name type="ordered locus">Sfri_1538</name>
</gene>
<name>HTPG_SHEFN</name>
<sequence length="637" mass="71540">MSQQETHGFQTEVKQLLQLMIHSLYSNKEIFLRELVSNAADAADKLRYLALTDDTLYEGNGDLRVRVSANKEKGTVTISDNGIGMTRDSVIEHLGTIAKSGTKEFFSNLSGEASKDSQLIGQFGVGFYSAFIVAKKVTVRTRAAGHAANEGVLWESEGEGSFNVESITKNERGTEIVLHLRDEETEFADDYRLRSIITKYSDHISVPVQMWNEGTPESDGPDGEKVAATEGEWKVMNKATALWTRNKSDITEEEYQEFYKHISHDYSDALKWSHNRVEGKQEYTSLLYIPAKAPWDMWNRDHKHGLKLFVQRVFIMDEAEQFLPTYLRFVRGLIDSNDLPLNVSREILQDNQVTTAMRVGITKRVLGMLEKLAKDEPEQYQSFWAEFGQVLKEGPAEDFANKERIAGLLRFASTHDNSAATTVSLEAYIERMKAGQDKIYYIVADSHEAAANSPHLELLRKKGIEVLLLSERIDEWLVNHLTEFKDKKLHSVTRGDLELGELEDAADKEAHDKVAEESKGLIERVKAALADSVSEVRVTSRLTDTPACVVAGEGEMSTQMIKLMQAAGQPVPESKPTFEINPTHPLVEHLNNETDEQLFADWANLLLQQALLSEKGSLADPSAFIKLTNQMLLASVK</sequence>
<organism>
    <name type="scientific">Shewanella frigidimarina (strain NCIMB 400)</name>
    <dbReference type="NCBI Taxonomy" id="318167"/>
    <lineage>
        <taxon>Bacteria</taxon>
        <taxon>Pseudomonadati</taxon>
        <taxon>Pseudomonadota</taxon>
        <taxon>Gammaproteobacteria</taxon>
        <taxon>Alteromonadales</taxon>
        <taxon>Shewanellaceae</taxon>
        <taxon>Shewanella</taxon>
    </lineage>
</organism>
<accession>Q084C6</accession>
<keyword id="KW-0067">ATP-binding</keyword>
<keyword id="KW-0143">Chaperone</keyword>
<keyword id="KW-0963">Cytoplasm</keyword>
<keyword id="KW-0547">Nucleotide-binding</keyword>
<keyword id="KW-1185">Reference proteome</keyword>
<keyword id="KW-0346">Stress response</keyword>
<reference key="1">
    <citation type="submission" date="2006-08" db="EMBL/GenBank/DDBJ databases">
        <title>Complete sequence of Shewanella frigidimarina NCIMB 400.</title>
        <authorList>
            <consortium name="US DOE Joint Genome Institute"/>
            <person name="Copeland A."/>
            <person name="Lucas S."/>
            <person name="Lapidus A."/>
            <person name="Barry K."/>
            <person name="Detter J.C."/>
            <person name="Glavina del Rio T."/>
            <person name="Hammon N."/>
            <person name="Israni S."/>
            <person name="Dalin E."/>
            <person name="Tice H."/>
            <person name="Pitluck S."/>
            <person name="Fredrickson J.K."/>
            <person name="Kolker E."/>
            <person name="McCuel L.A."/>
            <person name="DiChristina T."/>
            <person name="Nealson K.H."/>
            <person name="Newman D."/>
            <person name="Tiedje J.M."/>
            <person name="Zhou J."/>
            <person name="Romine M.F."/>
            <person name="Culley D.E."/>
            <person name="Serres M."/>
            <person name="Chertkov O."/>
            <person name="Brettin T."/>
            <person name="Bruce D."/>
            <person name="Han C."/>
            <person name="Tapia R."/>
            <person name="Gilna P."/>
            <person name="Schmutz J."/>
            <person name="Larimer F."/>
            <person name="Land M."/>
            <person name="Hauser L."/>
            <person name="Kyrpides N."/>
            <person name="Mikhailova N."/>
            <person name="Richardson P."/>
        </authorList>
    </citation>
    <scope>NUCLEOTIDE SEQUENCE [LARGE SCALE GENOMIC DNA]</scope>
    <source>
        <strain>NCIMB 400</strain>
    </source>
</reference>
<comment type="function">
    <text evidence="1">Molecular chaperone. Has ATPase activity.</text>
</comment>
<comment type="subunit">
    <text evidence="1">Homodimer.</text>
</comment>
<comment type="subcellular location">
    <subcellularLocation>
        <location evidence="1">Cytoplasm</location>
    </subcellularLocation>
</comment>
<comment type="similarity">
    <text evidence="1">Belongs to the heat shock protein 90 family.</text>
</comment>
<feature type="chain" id="PRO_1000014954" description="Chaperone protein HtpG">
    <location>
        <begin position="1"/>
        <end position="637"/>
    </location>
</feature>
<feature type="region of interest" description="A; substrate-binding" evidence="1">
    <location>
        <begin position="1"/>
        <end position="345"/>
    </location>
</feature>
<feature type="region of interest" description="B" evidence="1">
    <location>
        <begin position="346"/>
        <end position="562"/>
    </location>
</feature>
<feature type="region of interest" description="C" evidence="1">
    <location>
        <begin position="563"/>
        <end position="637"/>
    </location>
</feature>
<proteinExistence type="inferred from homology"/>